<sequence length="241" mass="26888">MSMLFYTLITAFLIGTQAEPHSESNVPAGHTIPQAHWTKLQHSLDTALRRARSAPAAAIAARVAGQTRNITVDPRLFKKRRLRSPRVLFSTQPPPEAADTQDLDFEVGGAAPFNRTHRSKRSSSHPIFHRGEFSVCDSVSVWVGDKTTATDIKGKEVMVLGEVNINNSVFKQYFFETKCRDPNPVDSGCRGIDSKHWNSYCTTTHTFVKALTMDGKQAAWRFIRIDTACVCVLSRKAVRRA</sequence>
<name>NGF_PANTR</name>
<organism>
    <name type="scientific">Pan troglodytes</name>
    <name type="common">Chimpanzee</name>
    <dbReference type="NCBI Taxonomy" id="9598"/>
    <lineage>
        <taxon>Eukaryota</taxon>
        <taxon>Metazoa</taxon>
        <taxon>Chordata</taxon>
        <taxon>Craniata</taxon>
        <taxon>Vertebrata</taxon>
        <taxon>Euteleostomi</taxon>
        <taxon>Mammalia</taxon>
        <taxon>Eutheria</taxon>
        <taxon>Euarchontoglires</taxon>
        <taxon>Primates</taxon>
        <taxon>Haplorrhini</taxon>
        <taxon>Catarrhini</taxon>
        <taxon>Hominidae</taxon>
        <taxon>Pan</taxon>
    </lineage>
</organism>
<proteinExistence type="evidence at transcript level"/>
<feature type="signal peptide" evidence="4">
    <location>
        <begin position="1"/>
        <end position="18"/>
    </location>
</feature>
<feature type="propeptide" id="PRO_0000019603" evidence="1">
    <location>
        <begin position="19"/>
        <end position="121"/>
    </location>
</feature>
<feature type="chain" id="PRO_0000019604" description="Beta-nerve growth factor">
    <location>
        <begin position="122"/>
        <end position="241"/>
    </location>
</feature>
<feature type="binding site" description="in other chain" evidence="3">
    <location>
        <position position="173"/>
    </location>
    <ligand>
        <name>a 1-acyl-sn-glycero-3-phospho-(1D-myo-inositol)</name>
        <dbReference type="ChEBI" id="CHEBI:64771"/>
        <note>ligand shared between dimeric partners</note>
    </ligand>
</feature>
<feature type="binding site" evidence="3">
    <location>
        <position position="209"/>
    </location>
    <ligand>
        <name>a 1-acyl-sn-glycero-3-phospho-(1D-myo-inositol)</name>
        <dbReference type="ChEBI" id="CHEBI:64771"/>
        <note>ligand shared between dimeric partners</note>
    </ligand>
</feature>
<feature type="binding site" evidence="3">
    <location>
        <position position="209"/>
    </location>
    <ligand>
        <name>a 1-acyl-sn-glycero-3-phospho-L-serine</name>
        <dbReference type="ChEBI" id="CHEBI:64379"/>
        <note>ligand shared between dimeric partners</note>
    </ligand>
</feature>
<feature type="glycosylation site" description="N-linked (GlcNAc...) asparagine" evidence="4">
    <location>
        <position position="69"/>
    </location>
</feature>
<feature type="glycosylation site" description="N-linked (GlcNAc...) asparagine" evidence="4">
    <location>
        <position position="114"/>
    </location>
</feature>
<feature type="glycosylation site" description="N-linked (GlcNAc...) asparagine" evidence="4">
    <location>
        <position position="166"/>
    </location>
</feature>
<feature type="disulfide bond" evidence="2">
    <location>
        <begin position="136"/>
        <end position="201"/>
    </location>
</feature>
<feature type="disulfide bond" evidence="2">
    <location>
        <begin position="179"/>
        <end position="229"/>
    </location>
</feature>
<feature type="disulfide bond" evidence="2">
    <location>
        <begin position="189"/>
        <end position="231"/>
    </location>
</feature>
<protein>
    <recommendedName>
        <fullName>Beta-nerve growth factor</fullName>
        <shortName>Beta-NGF</shortName>
    </recommendedName>
</protein>
<gene>
    <name type="primary">NGF</name>
    <name type="synonym">NGFB</name>
</gene>
<evidence type="ECO:0000250" key="1"/>
<evidence type="ECO:0000250" key="2">
    <source>
        <dbReference type="UniProtKB" id="P01138"/>
    </source>
</evidence>
<evidence type="ECO:0000250" key="3">
    <source>
        <dbReference type="UniProtKB" id="P01139"/>
    </source>
</evidence>
<evidence type="ECO:0000255" key="4"/>
<evidence type="ECO:0000305" key="5"/>
<accession>Q9N2F1</accession>
<accession>Q5IS63</accession>
<accession>Q8HZH3</accession>
<comment type="function">
    <text evidence="2 3">Nerve growth factor is important for the development and maintenance of the sympathetic and sensory nervous systems. Extracellular ligand for the NTRK1 and NGFR receptors, activates cellular signaling cascades to regulate neuronal proliferation, differentiation and survival (By similarity). The immature NGF precursor (proNGF) functions as a ligand for the heterodimeric receptor formed by SORCS2 and NGFR, and activates cellular signaling cascades that lead to inactivation of RAC1 and/or RAC2, reorganization of the actin cytoskeleton and neuronal growth cone collapse. In contrast to mature NGF, the precursor form (proNGF) promotes neuronal apoptosis (in vitro) (By similarity). Inhibits metalloproteinase-dependent proteolysis of platelet glycoprotein VI (By similarity). Binds lysophosphatidylinositol and lysophosphatidylserine between the two chains of the homodimer. The lipid-bound form promotes histamine relase from mast cells, contrary to the lipid-free form (By similarity).</text>
</comment>
<comment type="subunit">
    <text evidence="2 3">Homodimer. The homodimer interacts with a single NTRK1 chain. The homodimer interacts with a single NGFR chain (By similarity). The NGF dimer interacts with a single SORCS2 chain (via extracellular domain). The NGF precursor (proNGF) binds to a receptor complex formed by SORT1 and NGFR, which leads to NGF endocytosis. Both mature NGF and the immature NGF precursor (proNGF) interact with SORCS2 and with the heterodimer formed by SORCS2 and NGFR (via extracellular domains). The NGF precursor (proNGF) has much higher affinity for SORCS2 than mature NGF. The NGF precursor (proNGF) has much higher affinity for SORT1 than mature NGF (By similarity). Interacts with ADAM10 in a divalent cation-dependent manner (By similarity). Interacts with SORCS3 (By similarity).</text>
</comment>
<comment type="subcellular location">
    <subcellularLocation>
        <location evidence="2">Secreted</location>
    </subcellularLocation>
    <subcellularLocation>
        <location evidence="3">Endosome lumen</location>
    </subcellularLocation>
    <text evidence="3">ProNGF is endocytosed after binding to the cell surface receptor formed by SORT1 and NGFR.</text>
</comment>
<comment type="similarity">
    <text evidence="5">Belongs to the NGF-beta family.</text>
</comment>
<keyword id="KW-0165">Cleavage on pair of basic residues</keyword>
<keyword id="KW-1015">Disulfide bond</keyword>
<keyword id="KW-0967">Endosome</keyword>
<keyword id="KW-0325">Glycoprotein</keyword>
<keyword id="KW-0339">Growth factor</keyword>
<keyword id="KW-0446">Lipid-binding</keyword>
<keyword id="KW-0481">Metalloenzyme inhibitor</keyword>
<keyword id="KW-0483">Metalloprotease inhibitor</keyword>
<keyword id="KW-0646">Protease inhibitor</keyword>
<keyword id="KW-1185">Reference proteome</keyword>
<keyword id="KW-0964">Secreted</keyword>
<keyword id="KW-0732">Signal</keyword>
<dbReference type="EMBL" id="AB037518">
    <property type="protein sequence ID" value="BAA90438.1"/>
    <property type="molecule type" value="Genomic_DNA"/>
</dbReference>
<dbReference type="EMBL" id="AY665265">
    <property type="protein sequence ID" value="AAV74303.1"/>
    <property type="molecule type" value="mRNA"/>
</dbReference>
<dbReference type="EMBL" id="AY091925">
    <property type="protein sequence ID" value="AAM76543.1"/>
    <property type="molecule type" value="Genomic_DNA"/>
</dbReference>
<dbReference type="RefSeq" id="NP_001012439.1">
    <property type="nucleotide sequence ID" value="NM_001012437.1"/>
</dbReference>
<dbReference type="RefSeq" id="XP_009426346.3">
    <property type="nucleotide sequence ID" value="XM_009428071.5"/>
</dbReference>
<dbReference type="RefSeq" id="XP_063653883.1">
    <property type="nucleotide sequence ID" value="XM_063797813.1"/>
</dbReference>
<dbReference type="SMR" id="Q9N2F1"/>
<dbReference type="FunCoup" id="Q9N2F1">
    <property type="interactions" value="1211"/>
</dbReference>
<dbReference type="STRING" id="9598.ENSPTRP00000070324"/>
<dbReference type="GlyCosmos" id="Q9N2F1">
    <property type="glycosylation" value="3 sites, No reported glycans"/>
</dbReference>
<dbReference type="PaxDb" id="9598-ENSPTRP00000001964"/>
<dbReference type="GeneID" id="469423"/>
<dbReference type="KEGG" id="ptr:469423"/>
<dbReference type="CTD" id="4803"/>
<dbReference type="eggNOG" id="ENOG502RYPU">
    <property type="taxonomic scope" value="Eukaryota"/>
</dbReference>
<dbReference type="HOGENOM" id="CLU_059942_1_1_1"/>
<dbReference type="InParanoid" id="Q9N2F1"/>
<dbReference type="TreeFam" id="TF106463"/>
<dbReference type="Proteomes" id="UP000002277">
    <property type="component" value="Unplaced"/>
</dbReference>
<dbReference type="GO" id="GO:0030424">
    <property type="term" value="C:axon"/>
    <property type="evidence" value="ECO:0000318"/>
    <property type="project" value="GO_Central"/>
</dbReference>
<dbReference type="GO" id="GO:0030425">
    <property type="term" value="C:dendrite"/>
    <property type="evidence" value="ECO:0000318"/>
    <property type="project" value="GO_Central"/>
</dbReference>
<dbReference type="GO" id="GO:0031904">
    <property type="term" value="C:endosome lumen"/>
    <property type="evidence" value="ECO:0007669"/>
    <property type="project" value="UniProtKB-SubCell"/>
</dbReference>
<dbReference type="GO" id="GO:0005615">
    <property type="term" value="C:extracellular space"/>
    <property type="evidence" value="ECO:0000318"/>
    <property type="project" value="GO_Central"/>
</dbReference>
<dbReference type="GO" id="GO:0008021">
    <property type="term" value="C:synaptic vesicle"/>
    <property type="evidence" value="ECO:0000318"/>
    <property type="project" value="GO_Central"/>
</dbReference>
<dbReference type="GO" id="GO:0008083">
    <property type="term" value="F:growth factor activity"/>
    <property type="evidence" value="ECO:0000318"/>
    <property type="project" value="GO_Central"/>
</dbReference>
<dbReference type="GO" id="GO:0008289">
    <property type="term" value="F:lipid binding"/>
    <property type="evidence" value="ECO:0007669"/>
    <property type="project" value="UniProtKB-KW"/>
</dbReference>
<dbReference type="GO" id="GO:0008191">
    <property type="term" value="F:metalloendopeptidase inhibitor activity"/>
    <property type="evidence" value="ECO:0000250"/>
    <property type="project" value="UniProtKB"/>
</dbReference>
<dbReference type="GO" id="GO:0005163">
    <property type="term" value="F:nerve growth factor receptor binding"/>
    <property type="evidence" value="ECO:0000318"/>
    <property type="project" value="GO_Central"/>
</dbReference>
<dbReference type="GO" id="GO:0007169">
    <property type="term" value="P:cell surface receptor protein tyrosine kinase signaling pathway"/>
    <property type="evidence" value="ECO:0000318"/>
    <property type="project" value="GO_Central"/>
</dbReference>
<dbReference type="GO" id="GO:0050804">
    <property type="term" value="P:modulation of chemical synaptic transmission"/>
    <property type="evidence" value="ECO:0000318"/>
    <property type="project" value="GO_Central"/>
</dbReference>
<dbReference type="GO" id="GO:0043524">
    <property type="term" value="P:negative regulation of neuron apoptotic process"/>
    <property type="evidence" value="ECO:0000318"/>
    <property type="project" value="GO_Central"/>
</dbReference>
<dbReference type="GO" id="GO:0021675">
    <property type="term" value="P:nerve development"/>
    <property type="evidence" value="ECO:0000318"/>
    <property type="project" value="GO_Central"/>
</dbReference>
<dbReference type="GO" id="GO:0038180">
    <property type="term" value="P:nerve growth factor signaling pathway"/>
    <property type="evidence" value="ECO:0000318"/>
    <property type="project" value="GO_Central"/>
</dbReference>
<dbReference type="GO" id="GO:0048812">
    <property type="term" value="P:neuron projection morphogenesis"/>
    <property type="evidence" value="ECO:0000318"/>
    <property type="project" value="GO_Central"/>
</dbReference>
<dbReference type="FunFam" id="2.10.90.10:FF:000002">
    <property type="entry name" value="Brain-derived neurotrophic factor"/>
    <property type="match status" value="1"/>
</dbReference>
<dbReference type="Gene3D" id="2.10.90.10">
    <property type="entry name" value="Cystine-knot cytokines"/>
    <property type="match status" value="1"/>
</dbReference>
<dbReference type="InterPro" id="IPR029034">
    <property type="entry name" value="Cystine-knot_cytokine"/>
</dbReference>
<dbReference type="InterPro" id="IPR020408">
    <property type="entry name" value="Nerve_growth_factor-like"/>
</dbReference>
<dbReference type="InterPro" id="IPR002072">
    <property type="entry name" value="Nerve_growth_factor-rel"/>
</dbReference>
<dbReference type="InterPro" id="IPR020425">
    <property type="entry name" value="Nerve_growth_factor_bsu"/>
</dbReference>
<dbReference type="InterPro" id="IPR020437">
    <property type="entry name" value="Nerve_growth_factor_bsu_mml"/>
</dbReference>
<dbReference type="InterPro" id="IPR019846">
    <property type="entry name" value="Nerve_growth_factor_CS"/>
</dbReference>
<dbReference type="PANTHER" id="PTHR11589:SF10">
    <property type="entry name" value="BETA-NERVE GROWTH FACTOR"/>
    <property type="match status" value="1"/>
</dbReference>
<dbReference type="PANTHER" id="PTHR11589">
    <property type="entry name" value="NERVE GROWTH FACTOR NGF -RELATED"/>
    <property type="match status" value="1"/>
</dbReference>
<dbReference type="Pfam" id="PF00243">
    <property type="entry name" value="NGF"/>
    <property type="match status" value="1"/>
</dbReference>
<dbReference type="PIRSF" id="PIRSF001789">
    <property type="entry name" value="NGF"/>
    <property type="match status" value="1"/>
</dbReference>
<dbReference type="PRINTS" id="PR01925">
    <property type="entry name" value="MAMLNGFBETA"/>
</dbReference>
<dbReference type="PRINTS" id="PR00268">
    <property type="entry name" value="NGF"/>
</dbReference>
<dbReference type="PRINTS" id="PR01913">
    <property type="entry name" value="NGFBETA"/>
</dbReference>
<dbReference type="SMART" id="SM00140">
    <property type="entry name" value="NGF"/>
    <property type="match status" value="1"/>
</dbReference>
<dbReference type="SUPFAM" id="SSF57501">
    <property type="entry name" value="Cystine-knot cytokines"/>
    <property type="match status" value="1"/>
</dbReference>
<dbReference type="PROSITE" id="PS00248">
    <property type="entry name" value="NGF_1"/>
    <property type="match status" value="1"/>
</dbReference>
<dbReference type="PROSITE" id="PS50270">
    <property type="entry name" value="NGF_2"/>
    <property type="match status" value="1"/>
</dbReference>
<reference key="1">
    <citation type="journal article" date="2004" name="Mol. Biol. Evol.">
        <title>Human-specific amino acid changes found in 103 protein-coding genes.</title>
        <authorList>
            <person name="Kitano T."/>
            <person name="Liu Y.-H."/>
            <person name="Ueda S."/>
            <person name="Saitou N."/>
        </authorList>
    </citation>
    <scope>NUCLEOTIDE SEQUENCE [GENOMIC DNA]</scope>
    <source>
        <strain>Isolate 220</strain>
    </source>
</reference>
<reference key="2">
    <citation type="journal article" date="2004" name="Cell">
        <title>Accelerated evolution of nervous system genes in the origin of Homo sapiens.</title>
        <authorList>
            <person name="Dorus S."/>
            <person name="Vallender E.J."/>
            <person name="Evans P.D."/>
            <person name="Anderson J.R."/>
            <person name="Gilbert S.L."/>
            <person name="Mahowald M."/>
            <person name="Wyckoff G.J."/>
            <person name="Malcom C.M."/>
            <person name="Lahn B.T."/>
        </authorList>
    </citation>
    <scope>NUCLEOTIDE SEQUENCE [MRNA]</scope>
</reference>
<reference key="3">
    <citation type="submission" date="2002-03" db="EMBL/GenBank/DDBJ databases">
        <title>Molecular evolution in higher primates; gene specific and organism specific characteristics.</title>
        <authorList>
            <person name="O'Huigin C."/>
            <person name="Tichy H."/>
            <person name="Klein J."/>
        </authorList>
    </citation>
    <scope>NUCLEOTIDE SEQUENCE [GENOMIC DNA] OF 15-224</scope>
</reference>